<gene>
    <name evidence="1" type="primary">diaA</name>
    <name type="ordered locus">ECA0320</name>
</gene>
<reference key="1">
    <citation type="journal article" date="2004" name="Proc. Natl. Acad. Sci. U.S.A.">
        <title>Genome sequence of the enterobacterial phytopathogen Erwinia carotovora subsp. atroseptica and characterization of virulence factors.</title>
        <authorList>
            <person name="Bell K.S."/>
            <person name="Sebaihia M."/>
            <person name="Pritchard L."/>
            <person name="Holden M.T.G."/>
            <person name="Hyman L.J."/>
            <person name="Holeva M.C."/>
            <person name="Thomson N.R."/>
            <person name="Bentley S.D."/>
            <person name="Churcher L.J.C."/>
            <person name="Mungall K."/>
            <person name="Atkin R."/>
            <person name="Bason N."/>
            <person name="Brooks K."/>
            <person name="Chillingworth T."/>
            <person name="Clark K."/>
            <person name="Doggett J."/>
            <person name="Fraser A."/>
            <person name="Hance Z."/>
            <person name="Hauser H."/>
            <person name="Jagels K."/>
            <person name="Moule S."/>
            <person name="Norbertczak H."/>
            <person name="Ormond D."/>
            <person name="Price C."/>
            <person name="Quail M.A."/>
            <person name="Sanders M."/>
            <person name="Walker D."/>
            <person name="Whitehead S."/>
            <person name="Salmond G.P.C."/>
            <person name="Birch P.R.J."/>
            <person name="Parkhill J."/>
            <person name="Toth I.K."/>
        </authorList>
    </citation>
    <scope>NUCLEOTIDE SEQUENCE [LARGE SCALE GENOMIC DNA]</scope>
    <source>
        <strain>SCRI 1043 / ATCC BAA-672</strain>
    </source>
</reference>
<protein>
    <recommendedName>
        <fullName evidence="1">DnaA initiator-associating protein DiaA</fullName>
    </recommendedName>
</protein>
<dbReference type="EMBL" id="BX950851">
    <property type="protein sequence ID" value="CAG73240.1"/>
    <property type="molecule type" value="Genomic_DNA"/>
</dbReference>
<dbReference type="RefSeq" id="WP_011091952.1">
    <property type="nucleotide sequence ID" value="NC_004547.2"/>
</dbReference>
<dbReference type="SMR" id="Q6DAD4"/>
<dbReference type="STRING" id="218491.ECA0320"/>
<dbReference type="GeneID" id="61410617"/>
<dbReference type="KEGG" id="eca:ECA0320"/>
<dbReference type="eggNOG" id="COG0279">
    <property type="taxonomic scope" value="Bacteria"/>
</dbReference>
<dbReference type="HOGENOM" id="CLU_080999_3_1_6"/>
<dbReference type="OrthoDB" id="9810929at2"/>
<dbReference type="Proteomes" id="UP000007966">
    <property type="component" value="Chromosome"/>
</dbReference>
<dbReference type="GO" id="GO:0097367">
    <property type="term" value="F:carbohydrate derivative binding"/>
    <property type="evidence" value="ECO:0007669"/>
    <property type="project" value="InterPro"/>
</dbReference>
<dbReference type="GO" id="GO:1901135">
    <property type="term" value="P:carbohydrate derivative metabolic process"/>
    <property type="evidence" value="ECO:0007669"/>
    <property type="project" value="InterPro"/>
</dbReference>
<dbReference type="GO" id="GO:0006260">
    <property type="term" value="P:DNA replication"/>
    <property type="evidence" value="ECO:0007669"/>
    <property type="project" value="UniProtKB-UniRule"/>
</dbReference>
<dbReference type="CDD" id="cd05006">
    <property type="entry name" value="SIS_GmhA"/>
    <property type="match status" value="1"/>
</dbReference>
<dbReference type="FunFam" id="3.40.50.10490:FF:000006">
    <property type="entry name" value="DnaA initiator-associating protein DiaA"/>
    <property type="match status" value="1"/>
</dbReference>
<dbReference type="Gene3D" id="3.40.50.10490">
    <property type="entry name" value="Glucose-6-phosphate isomerase like protein, domain 1"/>
    <property type="match status" value="1"/>
</dbReference>
<dbReference type="HAMAP" id="MF_01157">
    <property type="entry name" value="SIS_DiaA"/>
    <property type="match status" value="1"/>
</dbReference>
<dbReference type="InterPro" id="IPR023070">
    <property type="entry name" value="DiaA"/>
</dbReference>
<dbReference type="InterPro" id="IPR035461">
    <property type="entry name" value="GmhA/DiaA"/>
</dbReference>
<dbReference type="InterPro" id="IPR001347">
    <property type="entry name" value="SIS_dom"/>
</dbReference>
<dbReference type="InterPro" id="IPR046348">
    <property type="entry name" value="SIS_dom_sf"/>
</dbReference>
<dbReference type="InterPro" id="IPR050099">
    <property type="entry name" value="SIS_GmhA/DiaA_subfam"/>
</dbReference>
<dbReference type="NCBIfam" id="NF008138">
    <property type="entry name" value="PRK10886.1"/>
    <property type="match status" value="1"/>
</dbReference>
<dbReference type="PANTHER" id="PTHR30390:SF6">
    <property type="entry name" value="DNAA INITIATOR-ASSOCIATING PROTEIN DIAA"/>
    <property type="match status" value="1"/>
</dbReference>
<dbReference type="PANTHER" id="PTHR30390">
    <property type="entry name" value="SEDOHEPTULOSE 7-PHOSPHATE ISOMERASE / DNAA INITIATOR-ASSOCIATING FACTOR FOR REPLICATION INITIATION"/>
    <property type="match status" value="1"/>
</dbReference>
<dbReference type="Pfam" id="PF13580">
    <property type="entry name" value="SIS_2"/>
    <property type="match status" value="1"/>
</dbReference>
<dbReference type="SUPFAM" id="SSF53697">
    <property type="entry name" value="SIS domain"/>
    <property type="match status" value="1"/>
</dbReference>
<dbReference type="PROSITE" id="PS51464">
    <property type="entry name" value="SIS"/>
    <property type="match status" value="1"/>
</dbReference>
<sequence>MLDRIKVCFTESIQTQIAAAEALPDAISRGAIAMVQSLLNGNKILCCGNGTSAANSQHFAASMINRFEAERPSLPAIALNADNVVLTAIANDRLHEEIYAKQVRALGQAGDVLLAISTRGNSRDIVKAVESAVTRDMTIVALTGYDGGELAGLLGPQDVEIRIPSHRSARIQEMHMLTVNCLCDLIDNTLFPHQND</sequence>
<accession>Q6DAD4</accession>
<keyword id="KW-0235">DNA replication</keyword>
<keyword id="KW-1185">Reference proteome</keyword>
<proteinExistence type="inferred from homology"/>
<organism>
    <name type="scientific">Pectobacterium atrosepticum (strain SCRI 1043 / ATCC BAA-672)</name>
    <name type="common">Erwinia carotovora subsp. atroseptica</name>
    <dbReference type="NCBI Taxonomy" id="218491"/>
    <lineage>
        <taxon>Bacteria</taxon>
        <taxon>Pseudomonadati</taxon>
        <taxon>Pseudomonadota</taxon>
        <taxon>Gammaproteobacteria</taxon>
        <taxon>Enterobacterales</taxon>
        <taxon>Pectobacteriaceae</taxon>
        <taxon>Pectobacterium</taxon>
    </lineage>
</organism>
<evidence type="ECO:0000255" key="1">
    <source>
        <dbReference type="HAMAP-Rule" id="MF_01157"/>
    </source>
</evidence>
<feature type="chain" id="PRO_0000136558" description="DnaA initiator-associating protein DiaA">
    <location>
        <begin position="1"/>
        <end position="196"/>
    </location>
</feature>
<feature type="domain" description="SIS" evidence="1">
    <location>
        <begin position="34"/>
        <end position="196"/>
    </location>
</feature>
<comment type="function">
    <text evidence="1">Required for the timely initiation of chromosomal replication via direct interactions with the DnaA initiator protein.</text>
</comment>
<comment type="subunit">
    <text evidence="1">Homotetramer; dimer of dimers.</text>
</comment>
<comment type="similarity">
    <text evidence="1">Belongs to the SIS family. DiaA subfamily.</text>
</comment>
<name>DIAA_PECAS</name>